<reference key="1">
    <citation type="journal article" date="2009" name="J. Bacteriol.">
        <title>Genome sequence of the probiotic bacterium Bifidobacterium animalis subsp. lactis AD011.</title>
        <authorList>
            <person name="Kim J.F."/>
            <person name="Jeong H."/>
            <person name="Yu D.S."/>
            <person name="Choi S.-H."/>
            <person name="Hur C.-G."/>
            <person name="Park M.-S."/>
            <person name="Yoon S.H."/>
            <person name="Kim D.-W."/>
            <person name="Ji G.E."/>
            <person name="Park H.-S."/>
            <person name="Oh T.K."/>
        </authorList>
    </citation>
    <scope>NUCLEOTIDE SEQUENCE [LARGE SCALE GENOMIC DNA]</scope>
    <source>
        <strain>AD011</strain>
    </source>
</reference>
<name>APT_BIFA0</name>
<keyword id="KW-0963">Cytoplasm</keyword>
<keyword id="KW-0328">Glycosyltransferase</keyword>
<keyword id="KW-0660">Purine salvage</keyword>
<keyword id="KW-1185">Reference proteome</keyword>
<keyword id="KW-0808">Transferase</keyword>
<feature type="chain" id="PRO_1000116231" description="Adenine phosphoribosyltransferase">
    <location>
        <begin position="1"/>
        <end position="193"/>
    </location>
</feature>
<accession>B8DUE5</accession>
<proteinExistence type="inferred from homology"/>
<gene>
    <name evidence="1" type="primary">apt</name>
    <name type="ordered locus">BLA_1339</name>
</gene>
<dbReference type="EC" id="2.4.2.7" evidence="1"/>
<dbReference type="EMBL" id="CP001213">
    <property type="protein sequence ID" value="ACL29624.1"/>
    <property type="molecule type" value="Genomic_DNA"/>
</dbReference>
<dbReference type="RefSeq" id="WP_004217961.1">
    <property type="nucleotide sequence ID" value="NC_011835.1"/>
</dbReference>
<dbReference type="SMR" id="B8DUE5"/>
<dbReference type="STRING" id="442563.BLA_1339"/>
<dbReference type="KEGG" id="bla:BLA_1339"/>
<dbReference type="PATRIC" id="fig|442563.4.peg.1401"/>
<dbReference type="HOGENOM" id="CLU_063339_3_2_11"/>
<dbReference type="UniPathway" id="UPA00588">
    <property type="reaction ID" value="UER00646"/>
</dbReference>
<dbReference type="Proteomes" id="UP000002456">
    <property type="component" value="Chromosome"/>
</dbReference>
<dbReference type="GO" id="GO:0005737">
    <property type="term" value="C:cytoplasm"/>
    <property type="evidence" value="ECO:0007669"/>
    <property type="project" value="UniProtKB-SubCell"/>
</dbReference>
<dbReference type="GO" id="GO:0002055">
    <property type="term" value="F:adenine binding"/>
    <property type="evidence" value="ECO:0007669"/>
    <property type="project" value="TreeGrafter"/>
</dbReference>
<dbReference type="GO" id="GO:0003999">
    <property type="term" value="F:adenine phosphoribosyltransferase activity"/>
    <property type="evidence" value="ECO:0007669"/>
    <property type="project" value="UniProtKB-UniRule"/>
</dbReference>
<dbReference type="GO" id="GO:0016208">
    <property type="term" value="F:AMP binding"/>
    <property type="evidence" value="ECO:0007669"/>
    <property type="project" value="TreeGrafter"/>
</dbReference>
<dbReference type="GO" id="GO:0006168">
    <property type="term" value="P:adenine salvage"/>
    <property type="evidence" value="ECO:0007669"/>
    <property type="project" value="InterPro"/>
</dbReference>
<dbReference type="GO" id="GO:0044209">
    <property type="term" value="P:AMP salvage"/>
    <property type="evidence" value="ECO:0007669"/>
    <property type="project" value="UniProtKB-UniRule"/>
</dbReference>
<dbReference type="GO" id="GO:0006166">
    <property type="term" value="P:purine ribonucleoside salvage"/>
    <property type="evidence" value="ECO:0007669"/>
    <property type="project" value="UniProtKB-KW"/>
</dbReference>
<dbReference type="CDD" id="cd06223">
    <property type="entry name" value="PRTases_typeI"/>
    <property type="match status" value="1"/>
</dbReference>
<dbReference type="FunFam" id="3.40.50.2020:FF:000021">
    <property type="entry name" value="Adenine phosphoribosyltransferase"/>
    <property type="match status" value="1"/>
</dbReference>
<dbReference type="Gene3D" id="3.40.50.2020">
    <property type="match status" value="1"/>
</dbReference>
<dbReference type="HAMAP" id="MF_00004">
    <property type="entry name" value="Aden_phosphoribosyltr"/>
    <property type="match status" value="1"/>
</dbReference>
<dbReference type="InterPro" id="IPR005764">
    <property type="entry name" value="Ade_phspho_trans"/>
</dbReference>
<dbReference type="InterPro" id="IPR000836">
    <property type="entry name" value="PRibTrfase_dom"/>
</dbReference>
<dbReference type="InterPro" id="IPR029057">
    <property type="entry name" value="PRTase-like"/>
</dbReference>
<dbReference type="InterPro" id="IPR050054">
    <property type="entry name" value="UPRTase/APRTase"/>
</dbReference>
<dbReference type="NCBIfam" id="TIGR01090">
    <property type="entry name" value="apt"/>
    <property type="match status" value="1"/>
</dbReference>
<dbReference type="NCBIfam" id="NF002634">
    <property type="entry name" value="PRK02304.1-3"/>
    <property type="match status" value="1"/>
</dbReference>
<dbReference type="NCBIfam" id="NF002636">
    <property type="entry name" value="PRK02304.1-5"/>
    <property type="match status" value="1"/>
</dbReference>
<dbReference type="PANTHER" id="PTHR32315">
    <property type="entry name" value="ADENINE PHOSPHORIBOSYLTRANSFERASE"/>
    <property type="match status" value="1"/>
</dbReference>
<dbReference type="PANTHER" id="PTHR32315:SF3">
    <property type="entry name" value="ADENINE PHOSPHORIBOSYLTRANSFERASE"/>
    <property type="match status" value="1"/>
</dbReference>
<dbReference type="Pfam" id="PF00156">
    <property type="entry name" value="Pribosyltran"/>
    <property type="match status" value="1"/>
</dbReference>
<dbReference type="SUPFAM" id="SSF53271">
    <property type="entry name" value="PRTase-like"/>
    <property type="match status" value="1"/>
</dbReference>
<dbReference type="PROSITE" id="PS00103">
    <property type="entry name" value="PUR_PYR_PR_TRANSFER"/>
    <property type="match status" value="1"/>
</dbReference>
<sequence>MSQTDIHVANAASMSQDDARYLISLIRTVPDFPREGILFRDFMPVFADSRGLRILLDALIAALPVHTDEFDAVAGLEARGFLFGPALAAQLGKGFIAIRKAGKLPPPVHACSYALEYGKATLEIEDTSVRNNERILIVDDLIATGGSAAAAKDLIESAGGKVAGYEFVMELEGLDGRTALGDYPYGSLLKMPA</sequence>
<organism>
    <name type="scientific">Bifidobacterium animalis subsp. lactis (strain AD011)</name>
    <dbReference type="NCBI Taxonomy" id="442563"/>
    <lineage>
        <taxon>Bacteria</taxon>
        <taxon>Bacillati</taxon>
        <taxon>Actinomycetota</taxon>
        <taxon>Actinomycetes</taxon>
        <taxon>Bifidobacteriales</taxon>
        <taxon>Bifidobacteriaceae</taxon>
        <taxon>Bifidobacterium</taxon>
    </lineage>
</organism>
<evidence type="ECO:0000255" key="1">
    <source>
        <dbReference type="HAMAP-Rule" id="MF_00004"/>
    </source>
</evidence>
<protein>
    <recommendedName>
        <fullName evidence="1">Adenine phosphoribosyltransferase</fullName>
        <shortName evidence="1">APRT</shortName>
        <ecNumber evidence="1">2.4.2.7</ecNumber>
    </recommendedName>
</protein>
<comment type="function">
    <text evidence="1">Catalyzes a salvage reaction resulting in the formation of AMP, that is energically less costly than de novo synthesis.</text>
</comment>
<comment type="catalytic activity">
    <reaction evidence="1">
        <text>AMP + diphosphate = 5-phospho-alpha-D-ribose 1-diphosphate + adenine</text>
        <dbReference type="Rhea" id="RHEA:16609"/>
        <dbReference type="ChEBI" id="CHEBI:16708"/>
        <dbReference type="ChEBI" id="CHEBI:33019"/>
        <dbReference type="ChEBI" id="CHEBI:58017"/>
        <dbReference type="ChEBI" id="CHEBI:456215"/>
        <dbReference type="EC" id="2.4.2.7"/>
    </reaction>
</comment>
<comment type="pathway">
    <text evidence="1">Purine metabolism; AMP biosynthesis via salvage pathway; AMP from adenine: step 1/1.</text>
</comment>
<comment type="subunit">
    <text evidence="1">Homodimer.</text>
</comment>
<comment type="subcellular location">
    <subcellularLocation>
        <location evidence="1">Cytoplasm</location>
    </subcellularLocation>
</comment>
<comment type="similarity">
    <text evidence="1">Belongs to the purine/pyrimidine phosphoribosyltransferase family.</text>
</comment>